<dbReference type="EC" id="2.1.1.172" evidence="1"/>
<dbReference type="EMBL" id="CP000753">
    <property type="protein sequence ID" value="ABS06963.1"/>
    <property type="molecule type" value="Genomic_DNA"/>
</dbReference>
<dbReference type="RefSeq" id="WP_012088316.1">
    <property type="nucleotide sequence ID" value="NC_009665.1"/>
</dbReference>
<dbReference type="SMR" id="A6WJH4"/>
<dbReference type="KEGG" id="sbm:Shew185_0806"/>
<dbReference type="HOGENOM" id="CLU_049581_0_1_6"/>
<dbReference type="GO" id="GO:0005737">
    <property type="term" value="C:cytoplasm"/>
    <property type="evidence" value="ECO:0007669"/>
    <property type="project" value="UniProtKB-SubCell"/>
</dbReference>
<dbReference type="GO" id="GO:0052914">
    <property type="term" value="F:16S rRNA (guanine(1207)-N(2))-methyltransferase activity"/>
    <property type="evidence" value="ECO:0007669"/>
    <property type="project" value="UniProtKB-EC"/>
</dbReference>
<dbReference type="GO" id="GO:0003676">
    <property type="term" value="F:nucleic acid binding"/>
    <property type="evidence" value="ECO:0007669"/>
    <property type="project" value="InterPro"/>
</dbReference>
<dbReference type="CDD" id="cd02440">
    <property type="entry name" value="AdoMet_MTases"/>
    <property type="match status" value="1"/>
</dbReference>
<dbReference type="Gene3D" id="3.40.50.150">
    <property type="entry name" value="Vaccinia Virus protein VP39"/>
    <property type="match status" value="2"/>
</dbReference>
<dbReference type="HAMAP" id="MF_01862">
    <property type="entry name" value="16SrRNA_methyltr_C"/>
    <property type="match status" value="1"/>
</dbReference>
<dbReference type="InterPro" id="IPR002052">
    <property type="entry name" value="DNA_methylase_N6_adenine_CS"/>
</dbReference>
<dbReference type="InterPro" id="IPR013675">
    <property type="entry name" value="Mtase_sm_N"/>
</dbReference>
<dbReference type="InterPro" id="IPR023543">
    <property type="entry name" value="rRNA_ssu_MeTfrase_C"/>
</dbReference>
<dbReference type="InterPro" id="IPR046977">
    <property type="entry name" value="RsmC/RlmG"/>
</dbReference>
<dbReference type="InterPro" id="IPR029063">
    <property type="entry name" value="SAM-dependent_MTases_sf"/>
</dbReference>
<dbReference type="InterPro" id="IPR007848">
    <property type="entry name" value="Small_mtfrase_dom"/>
</dbReference>
<dbReference type="PANTHER" id="PTHR47816">
    <property type="entry name" value="RIBOSOMAL RNA SMALL SUBUNIT METHYLTRANSFERASE C"/>
    <property type="match status" value="1"/>
</dbReference>
<dbReference type="PANTHER" id="PTHR47816:SF4">
    <property type="entry name" value="RIBOSOMAL RNA SMALL SUBUNIT METHYLTRANSFERASE C"/>
    <property type="match status" value="1"/>
</dbReference>
<dbReference type="Pfam" id="PF05175">
    <property type="entry name" value="MTS"/>
    <property type="match status" value="1"/>
</dbReference>
<dbReference type="Pfam" id="PF08468">
    <property type="entry name" value="MTS_N"/>
    <property type="match status" value="1"/>
</dbReference>
<dbReference type="SUPFAM" id="SSF53335">
    <property type="entry name" value="S-adenosyl-L-methionine-dependent methyltransferases"/>
    <property type="match status" value="2"/>
</dbReference>
<feature type="chain" id="PRO_0000369768" description="Ribosomal RNA small subunit methyltransferase C">
    <location>
        <begin position="1"/>
        <end position="347"/>
    </location>
</feature>
<proteinExistence type="inferred from homology"/>
<comment type="function">
    <text evidence="1">Specifically methylates the guanine in position 1207 of 16S rRNA in the 30S particle.</text>
</comment>
<comment type="catalytic activity">
    <reaction evidence="1">
        <text>guanosine(1207) in 16S rRNA + S-adenosyl-L-methionine = N(2)-methylguanosine(1207) in 16S rRNA + S-adenosyl-L-homocysteine + H(+)</text>
        <dbReference type="Rhea" id="RHEA:42736"/>
        <dbReference type="Rhea" id="RHEA-COMP:10213"/>
        <dbReference type="Rhea" id="RHEA-COMP:10214"/>
        <dbReference type="ChEBI" id="CHEBI:15378"/>
        <dbReference type="ChEBI" id="CHEBI:57856"/>
        <dbReference type="ChEBI" id="CHEBI:59789"/>
        <dbReference type="ChEBI" id="CHEBI:74269"/>
        <dbReference type="ChEBI" id="CHEBI:74481"/>
        <dbReference type="EC" id="2.1.1.172"/>
    </reaction>
</comment>
<comment type="subunit">
    <text evidence="1">Monomer.</text>
</comment>
<comment type="subcellular location">
    <subcellularLocation>
        <location evidence="1">Cytoplasm</location>
    </subcellularLocation>
</comment>
<comment type="similarity">
    <text evidence="1">Belongs to the methyltransferase superfamily. RsmC family.</text>
</comment>
<organism>
    <name type="scientific">Shewanella baltica (strain OS185)</name>
    <dbReference type="NCBI Taxonomy" id="402882"/>
    <lineage>
        <taxon>Bacteria</taxon>
        <taxon>Pseudomonadati</taxon>
        <taxon>Pseudomonadota</taxon>
        <taxon>Gammaproteobacteria</taxon>
        <taxon>Alteromonadales</taxon>
        <taxon>Shewanellaceae</taxon>
        <taxon>Shewanella</taxon>
    </lineage>
</organism>
<reference key="1">
    <citation type="submission" date="2007-07" db="EMBL/GenBank/DDBJ databases">
        <title>Complete sequence of chromosome of Shewanella baltica OS185.</title>
        <authorList>
            <consortium name="US DOE Joint Genome Institute"/>
            <person name="Copeland A."/>
            <person name="Lucas S."/>
            <person name="Lapidus A."/>
            <person name="Barry K."/>
            <person name="Glavina del Rio T."/>
            <person name="Dalin E."/>
            <person name="Tice H."/>
            <person name="Pitluck S."/>
            <person name="Sims D."/>
            <person name="Brettin T."/>
            <person name="Bruce D."/>
            <person name="Detter J.C."/>
            <person name="Han C."/>
            <person name="Schmutz J."/>
            <person name="Larimer F."/>
            <person name="Land M."/>
            <person name="Hauser L."/>
            <person name="Kyrpides N."/>
            <person name="Mikhailova N."/>
            <person name="Brettar I."/>
            <person name="Rodrigues J."/>
            <person name="Konstantinidis K."/>
            <person name="Tiedje J."/>
            <person name="Richardson P."/>
        </authorList>
    </citation>
    <scope>NUCLEOTIDE SEQUENCE [LARGE SCALE GENOMIC DNA]</scope>
    <source>
        <strain>OS185</strain>
    </source>
</reference>
<sequence>MLTNPSQVIIRNQDSLSQHKVLVLNHEADLLPKALLDVAASVDALALDYHHYLHLAPHANSKLRCYFGHDLPHQDPLEREKYDTVIVYFPKAKPLAPYLFNLAANHLVPNGQLLVVGENKGGIKSLVKLLPEYFATGMKLDNARHCLLFGSSLEGSAPAMKLSDWVSQYQLTTPQGEISICNLVGVFSEKRLDLGTELLLSHLPTLSGRVLDFGCGAGVIAAALLKAQPSLSLECVDINAMALASCELTLAANGMTAKVYPSDGLAQTTGKFNGIISNPPFHDGLASTTSIAQNFVTDSAKQLQHNGIWQIVANRHLPYSDIIAAEFGQLKVVADNNKYKLYYFQHK</sequence>
<name>RSMC_SHEB8</name>
<evidence type="ECO:0000255" key="1">
    <source>
        <dbReference type="HAMAP-Rule" id="MF_01862"/>
    </source>
</evidence>
<accession>A6WJH4</accession>
<protein>
    <recommendedName>
        <fullName evidence="1">Ribosomal RNA small subunit methyltransferase C</fullName>
        <ecNumber evidence="1">2.1.1.172</ecNumber>
    </recommendedName>
    <alternativeName>
        <fullName evidence="1">16S rRNA m2G1207 methyltransferase</fullName>
    </alternativeName>
    <alternativeName>
        <fullName evidence="1">rRNA (guanine-N(2)-)-methyltransferase RsmC</fullName>
    </alternativeName>
</protein>
<gene>
    <name evidence="1" type="primary">rsmC</name>
    <name type="ordered locus">Shew185_0806</name>
</gene>
<keyword id="KW-0963">Cytoplasm</keyword>
<keyword id="KW-0489">Methyltransferase</keyword>
<keyword id="KW-0698">rRNA processing</keyword>
<keyword id="KW-0949">S-adenosyl-L-methionine</keyword>
<keyword id="KW-0808">Transferase</keyword>